<proteinExistence type="inferred from homology"/>
<feature type="chain" id="PRO_1000083887" description="Urease accessory protein UreE">
    <location>
        <begin position="1"/>
        <end position="152"/>
    </location>
</feature>
<protein>
    <recommendedName>
        <fullName evidence="1">Urease accessory protein UreE</fullName>
    </recommendedName>
</protein>
<dbReference type="EMBL" id="CP000822">
    <property type="protein sequence ID" value="ABV15514.1"/>
    <property type="molecule type" value="Genomic_DNA"/>
</dbReference>
<dbReference type="RefSeq" id="WP_012135197.1">
    <property type="nucleotide sequence ID" value="NC_009792.1"/>
</dbReference>
<dbReference type="SMR" id="A8APV1"/>
<dbReference type="STRING" id="290338.CKO_04458"/>
<dbReference type="GeneID" id="45138027"/>
<dbReference type="KEGG" id="cko:CKO_04458"/>
<dbReference type="HOGENOM" id="CLU_093757_2_0_6"/>
<dbReference type="OrthoDB" id="5421304at2"/>
<dbReference type="Proteomes" id="UP000008148">
    <property type="component" value="Chromosome"/>
</dbReference>
<dbReference type="GO" id="GO:0005737">
    <property type="term" value="C:cytoplasm"/>
    <property type="evidence" value="ECO:0007669"/>
    <property type="project" value="UniProtKB-SubCell"/>
</dbReference>
<dbReference type="GO" id="GO:0016151">
    <property type="term" value="F:nickel cation binding"/>
    <property type="evidence" value="ECO:0007669"/>
    <property type="project" value="UniProtKB-UniRule"/>
</dbReference>
<dbReference type="GO" id="GO:0051082">
    <property type="term" value="F:unfolded protein binding"/>
    <property type="evidence" value="ECO:0007669"/>
    <property type="project" value="UniProtKB-UniRule"/>
</dbReference>
<dbReference type="GO" id="GO:0006457">
    <property type="term" value="P:protein folding"/>
    <property type="evidence" value="ECO:0007669"/>
    <property type="project" value="InterPro"/>
</dbReference>
<dbReference type="GO" id="GO:0065003">
    <property type="term" value="P:protein-containing complex assembly"/>
    <property type="evidence" value="ECO:0007669"/>
    <property type="project" value="InterPro"/>
</dbReference>
<dbReference type="GO" id="GO:0019627">
    <property type="term" value="P:urea metabolic process"/>
    <property type="evidence" value="ECO:0007669"/>
    <property type="project" value="InterPro"/>
</dbReference>
<dbReference type="Gene3D" id="2.60.260.20">
    <property type="entry name" value="Urease metallochaperone UreE, N-terminal domain"/>
    <property type="match status" value="1"/>
</dbReference>
<dbReference type="Gene3D" id="3.30.70.790">
    <property type="entry name" value="UreE, C-terminal domain"/>
    <property type="match status" value="1"/>
</dbReference>
<dbReference type="HAMAP" id="MF_00822">
    <property type="entry name" value="UreE"/>
    <property type="match status" value="1"/>
</dbReference>
<dbReference type="InterPro" id="IPR012406">
    <property type="entry name" value="UreE"/>
</dbReference>
<dbReference type="InterPro" id="IPR007864">
    <property type="entry name" value="UreE_C_dom"/>
</dbReference>
<dbReference type="InterPro" id="IPR004029">
    <property type="entry name" value="UreE_N"/>
</dbReference>
<dbReference type="InterPro" id="IPR036118">
    <property type="entry name" value="UreE_N_sf"/>
</dbReference>
<dbReference type="NCBIfam" id="NF009751">
    <property type="entry name" value="PRK13261.1-1"/>
    <property type="match status" value="1"/>
</dbReference>
<dbReference type="Pfam" id="PF05194">
    <property type="entry name" value="UreE_C"/>
    <property type="match status" value="1"/>
</dbReference>
<dbReference type="Pfam" id="PF02814">
    <property type="entry name" value="UreE_N"/>
    <property type="match status" value="1"/>
</dbReference>
<dbReference type="PIRSF" id="PIRSF036402">
    <property type="entry name" value="Ureas_acces_UreE"/>
    <property type="match status" value="1"/>
</dbReference>
<dbReference type="SMART" id="SM00988">
    <property type="entry name" value="UreE_N"/>
    <property type="match status" value="1"/>
</dbReference>
<dbReference type="SUPFAM" id="SSF69737">
    <property type="entry name" value="Urease metallochaperone UreE, C-terminal domain"/>
    <property type="match status" value="1"/>
</dbReference>
<dbReference type="SUPFAM" id="SSF69287">
    <property type="entry name" value="Urease metallochaperone UreE, N-terminal domain"/>
    <property type="match status" value="1"/>
</dbReference>
<comment type="function">
    <text evidence="1">Involved in urease metallocenter assembly. Binds nickel. Probably functions as a nickel donor during metallocenter assembly.</text>
</comment>
<comment type="subcellular location">
    <subcellularLocation>
        <location evidence="1">Cytoplasm</location>
    </subcellularLocation>
</comment>
<comment type="similarity">
    <text evidence="1">Belongs to the UreE family.</text>
</comment>
<evidence type="ECO:0000255" key="1">
    <source>
        <dbReference type="HAMAP-Rule" id="MF_00822"/>
    </source>
</evidence>
<gene>
    <name evidence="1" type="primary">ureE</name>
    <name type="ordered locus">CKO_04458</name>
</gene>
<reference key="1">
    <citation type="submission" date="2007-08" db="EMBL/GenBank/DDBJ databases">
        <authorList>
            <consortium name="The Citrobacter koseri Genome Sequencing Project"/>
            <person name="McClelland M."/>
            <person name="Sanderson E.K."/>
            <person name="Porwollik S."/>
            <person name="Spieth J."/>
            <person name="Clifton W.S."/>
            <person name="Latreille P."/>
            <person name="Courtney L."/>
            <person name="Wang C."/>
            <person name="Pepin K."/>
            <person name="Bhonagiri V."/>
            <person name="Nash W."/>
            <person name="Johnson M."/>
            <person name="Thiruvilangam P."/>
            <person name="Wilson R."/>
        </authorList>
    </citation>
    <scope>NUCLEOTIDE SEQUENCE [LARGE SCALE GENOMIC DNA]</scope>
    <source>
        <strain>ATCC BAA-895 / CDC 4225-83 / SGSC4696</strain>
    </source>
</reference>
<organism>
    <name type="scientific">Citrobacter koseri (strain ATCC BAA-895 / CDC 4225-83 / SGSC4696)</name>
    <dbReference type="NCBI Taxonomy" id="290338"/>
    <lineage>
        <taxon>Bacteria</taxon>
        <taxon>Pseudomonadati</taxon>
        <taxon>Pseudomonadota</taxon>
        <taxon>Gammaproteobacteria</taxon>
        <taxon>Enterobacterales</taxon>
        <taxon>Enterobacteriaceae</taxon>
        <taxon>Citrobacter</taxon>
    </lineage>
</organism>
<sequence>MLYLTQRIETPAAVTATLTLPIDVRVKSRAKVVLGDGREAGLLLPRGLLLRGGDRLSTEDGAEVVEIIAANEAVSVVRCADPFLLAKACYHLGNRHVPLQILPDELRYHHDHVLDDMLRQFSLEVTFAHLPFEPEAGAYASESHGHHHGHAH</sequence>
<accession>A8APV1</accession>
<name>UREE_CITK8</name>
<keyword id="KW-0143">Chaperone</keyword>
<keyword id="KW-0963">Cytoplasm</keyword>
<keyword id="KW-0533">Nickel</keyword>
<keyword id="KW-0996">Nickel insertion</keyword>
<keyword id="KW-1185">Reference proteome</keyword>